<accession>C4XI54</accession>
<name>TRPA_SOLM1</name>
<reference key="1">
    <citation type="journal article" date="2009" name="Genome Res.">
        <title>Whole genome sequence of Desulfovibrio magneticus strain RS-1 revealed common gene clusters in magnetotactic bacteria.</title>
        <authorList>
            <person name="Nakazawa H."/>
            <person name="Arakaki A."/>
            <person name="Narita-Yamada S."/>
            <person name="Yashiro I."/>
            <person name="Jinno K."/>
            <person name="Aoki N."/>
            <person name="Tsuruyama A."/>
            <person name="Okamura Y."/>
            <person name="Tanikawa S."/>
            <person name="Fujita N."/>
            <person name="Takeyama H."/>
            <person name="Matsunaga T."/>
        </authorList>
    </citation>
    <scope>NUCLEOTIDE SEQUENCE [LARGE SCALE GENOMIC DNA]</scope>
    <source>
        <strain>ATCC 700980 / DSM 13731 / RS-1</strain>
    </source>
</reference>
<protein>
    <recommendedName>
        <fullName evidence="1">Tryptophan synthase alpha chain</fullName>
        <ecNumber evidence="1">4.2.1.20</ecNumber>
    </recommendedName>
</protein>
<feature type="chain" id="PRO_1000203179" description="Tryptophan synthase alpha chain">
    <location>
        <begin position="1"/>
        <end position="256"/>
    </location>
</feature>
<feature type="active site" description="Proton acceptor" evidence="1">
    <location>
        <position position="51"/>
    </location>
</feature>
<feature type="active site" description="Proton acceptor" evidence="1">
    <location>
        <position position="62"/>
    </location>
</feature>
<keyword id="KW-0028">Amino-acid biosynthesis</keyword>
<keyword id="KW-0057">Aromatic amino acid biosynthesis</keyword>
<keyword id="KW-0456">Lyase</keyword>
<keyword id="KW-0822">Tryptophan biosynthesis</keyword>
<organism>
    <name type="scientific">Solidesulfovibrio magneticus (strain ATCC 700980 / DSM 13731 / RS-1)</name>
    <name type="common">Desulfovibrio magneticus</name>
    <dbReference type="NCBI Taxonomy" id="573370"/>
    <lineage>
        <taxon>Bacteria</taxon>
        <taxon>Pseudomonadati</taxon>
        <taxon>Thermodesulfobacteriota</taxon>
        <taxon>Desulfovibrionia</taxon>
        <taxon>Desulfovibrionales</taxon>
        <taxon>Desulfovibrionaceae</taxon>
        <taxon>Solidesulfovibrio</taxon>
    </lineage>
</organism>
<proteinExistence type="inferred from homology"/>
<dbReference type="EC" id="4.2.1.20" evidence="1"/>
<dbReference type="EMBL" id="AP010904">
    <property type="protein sequence ID" value="BAH74016.1"/>
    <property type="molecule type" value="Genomic_DNA"/>
</dbReference>
<dbReference type="RefSeq" id="WP_012750097.1">
    <property type="nucleotide sequence ID" value="NC_012796.1"/>
</dbReference>
<dbReference type="SMR" id="C4XI54"/>
<dbReference type="STRING" id="573370.DMR_05250"/>
<dbReference type="KEGG" id="dma:DMR_05250"/>
<dbReference type="eggNOG" id="COG0159">
    <property type="taxonomic scope" value="Bacteria"/>
</dbReference>
<dbReference type="HOGENOM" id="CLU_016734_0_2_7"/>
<dbReference type="OrthoDB" id="9804578at2"/>
<dbReference type="UniPathway" id="UPA00035">
    <property type="reaction ID" value="UER00044"/>
</dbReference>
<dbReference type="Proteomes" id="UP000009071">
    <property type="component" value="Chromosome"/>
</dbReference>
<dbReference type="GO" id="GO:0005829">
    <property type="term" value="C:cytosol"/>
    <property type="evidence" value="ECO:0007669"/>
    <property type="project" value="TreeGrafter"/>
</dbReference>
<dbReference type="GO" id="GO:0004834">
    <property type="term" value="F:tryptophan synthase activity"/>
    <property type="evidence" value="ECO:0007669"/>
    <property type="project" value="UniProtKB-UniRule"/>
</dbReference>
<dbReference type="CDD" id="cd04724">
    <property type="entry name" value="Tryptophan_synthase_alpha"/>
    <property type="match status" value="1"/>
</dbReference>
<dbReference type="Gene3D" id="3.20.20.70">
    <property type="entry name" value="Aldolase class I"/>
    <property type="match status" value="1"/>
</dbReference>
<dbReference type="HAMAP" id="MF_00131">
    <property type="entry name" value="Trp_synth_alpha"/>
    <property type="match status" value="1"/>
</dbReference>
<dbReference type="InterPro" id="IPR013785">
    <property type="entry name" value="Aldolase_TIM"/>
</dbReference>
<dbReference type="InterPro" id="IPR011060">
    <property type="entry name" value="RibuloseP-bd_barrel"/>
</dbReference>
<dbReference type="InterPro" id="IPR018204">
    <property type="entry name" value="Trp_synthase_alpha_AS"/>
</dbReference>
<dbReference type="InterPro" id="IPR002028">
    <property type="entry name" value="Trp_synthase_suA"/>
</dbReference>
<dbReference type="NCBIfam" id="TIGR00262">
    <property type="entry name" value="trpA"/>
    <property type="match status" value="1"/>
</dbReference>
<dbReference type="PANTHER" id="PTHR43406:SF1">
    <property type="entry name" value="TRYPTOPHAN SYNTHASE ALPHA CHAIN, CHLOROPLASTIC"/>
    <property type="match status" value="1"/>
</dbReference>
<dbReference type="PANTHER" id="PTHR43406">
    <property type="entry name" value="TRYPTOPHAN SYNTHASE, ALPHA CHAIN"/>
    <property type="match status" value="1"/>
</dbReference>
<dbReference type="Pfam" id="PF00290">
    <property type="entry name" value="Trp_syntA"/>
    <property type="match status" value="1"/>
</dbReference>
<dbReference type="SUPFAM" id="SSF51366">
    <property type="entry name" value="Ribulose-phoshate binding barrel"/>
    <property type="match status" value="1"/>
</dbReference>
<dbReference type="PROSITE" id="PS00167">
    <property type="entry name" value="TRP_SYNTHASE_ALPHA"/>
    <property type="match status" value="1"/>
</dbReference>
<gene>
    <name evidence="1" type="primary">trpA</name>
    <name type="ordered locus">DMR_05250</name>
</gene>
<sequence>MSQSILTTRIMEALAAGRKALIPFLPGGFPDKERFFDELAALDAGGADIIEIGVPFSDPVADGPVVEQASLDCLLNGTCLSWLFYELGKRKGQYRAGLVLMGYYNPFLQYGLEQLAADAADAGVSGFIVPDVPLEESGPLREALDKHGLDLIPLVGLNTSEERLAAYAQNARGYVYFVSVLGTTGMRESLPTEVKERLTAVRRIFNVPVALGFGIKSPEQLYAFGDLVDGVVFGSALIAHIKAGGTAAEFMARWRG</sequence>
<comment type="function">
    <text evidence="1">The alpha subunit is responsible for the aldol cleavage of indoleglycerol phosphate to indole and glyceraldehyde 3-phosphate.</text>
</comment>
<comment type="catalytic activity">
    <reaction evidence="1">
        <text>(1S,2R)-1-C-(indol-3-yl)glycerol 3-phosphate + L-serine = D-glyceraldehyde 3-phosphate + L-tryptophan + H2O</text>
        <dbReference type="Rhea" id="RHEA:10532"/>
        <dbReference type="ChEBI" id="CHEBI:15377"/>
        <dbReference type="ChEBI" id="CHEBI:33384"/>
        <dbReference type="ChEBI" id="CHEBI:57912"/>
        <dbReference type="ChEBI" id="CHEBI:58866"/>
        <dbReference type="ChEBI" id="CHEBI:59776"/>
        <dbReference type="EC" id="4.2.1.20"/>
    </reaction>
</comment>
<comment type="pathway">
    <text evidence="1">Amino-acid biosynthesis; L-tryptophan biosynthesis; L-tryptophan from chorismate: step 5/5.</text>
</comment>
<comment type="subunit">
    <text evidence="1">Tetramer of two alpha and two beta chains.</text>
</comment>
<comment type="similarity">
    <text evidence="1">Belongs to the TrpA family.</text>
</comment>
<evidence type="ECO:0000255" key="1">
    <source>
        <dbReference type="HAMAP-Rule" id="MF_00131"/>
    </source>
</evidence>